<keyword id="KW-0963">Cytoplasm</keyword>
<keyword id="KW-0328">Glycosyltransferase</keyword>
<keyword id="KW-0660">Purine salvage</keyword>
<keyword id="KW-0808">Transferase</keyword>
<feature type="chain" id="PRO_1000088969" description="Adenine phosphoribosyltransferase">
    <location>
        <begin position="1"/>
        <end position="183"/>
    </location>
</feature>
<accession>B1XFQ6</accession>
<protein>
    <recommendedName>
        <fullName evidence="1">Adenine phosphoribosyltransferase</fullName>
        <shortName evidence="1">APRT</shortName>
        <ecNumber evidence="1">2.4.2.7</ecNumber>
    </recommendedName>
</protein>
<name>APT_ECODH</name>
<sequence>MTATAQQLEYLKNSIKSIQDYPKPGILFRDVTSLLEDPKAYALSIDLLVERYKNAGITKVVGTEARGFLFGAPVALGLGVGFVPVRKPGKLPRETISETYDLEYGTDQLEIHVDAIKPGDKVLVVDDLLATGGTIEATVKLIRRLGGEVADAAFIINLFDLGGEQRLEKQGITSYSLVPFPGH</sequence>
<proteinExistence type="inferred from homology"/>
<reference key="1">
    <citation type="journal article" date="2008" name="J. Bacteriol.">
        <title>The complete genome sequence of Escherichia coli DH10B: insights into the biology of a laboratory workhorse.</title>
        <authorList>
            <person name="Durfee T."/>
            <person name="Nelson R."/>
            <person name="Baldwin S."/>
            <person name="Plunkett G. III"/>
            <person name="Burland V."/>
            <person name="Mau B."/>
            <person name="Petrosino J.F."/>
            <person name="Qin X."/>
            <person name="Muzny D.M."/>
            <person name="Ayele M."/>
            <person name="Gibbs R.A."/>
            <person name="Csorgo B."/>
            <person name="Posfai G."/>
            <person name="Weinstock G.M."/>
            <person name="Blattner F.R."/>
        </authorList>
    </citation>
    <scope>NUCLEOTIDE SEQUENCE [LARGE SCALE GENOMIC DNA]</scope>
    <source>
        <strain>K12 / DH10B</strain>
    </source>
</reference>
<organism>
    <name type="scientific">Escherichia coli (strain K12 / DH10B)</name>
    <dbReference type="NCBI Taxonomy" id="316385"/>
    <lineage>
        <taxon>Bacteria</taxon>
        <taxon>Pseudomonadati</taxon>
        <taxon>Pseudomonadota</taxon>
        <taxon>Gammaproteobacteria</taxon>
        <taxon>Enterobacterales</taxon>
        <taxon>Enterobacteriaceae</taxon>
        <taxon>Escherichia</taxon>
    </lineage>
</organism>
<evidence type="ECO:0000255" key="1">
    <source>
        <dbReference type="HAMAP-Rule" id="MF_00004"/>
    </source>
</evidence>
<comment type="function">
    <text evidence="1">Catalyzes a salvage reaction resulting in the formation of AMP, that is energically less costly than de novo synthesis.</text>
</comment>
<comment type="catalytic activity">
    <reaction evidence="1">
        <text>AMP + diphosphate = 5-phospho-alpha-D-ribose 1-diphosphate + adenine</text>
        <dbReference type="Rhea" id="RHEA:16609"/>
        <dbReference type="ChEBI" id="CHEBI:16708"/>
        <dbReference type="ChEBI" id="CHEBI:33019"/>
        <dbReference type="ChEBI" id="CHEBI:58017"/>
        <dbReference type="ChEBI" id="CHEBI:456215"/>
        <dbReference type="EC" id="2.4.2.7"/>
    </reaction>
</comment>
<comment type="pathway">
    <text evidence="1">Purine metabolism; AMP biosynthesis via salvage pathway; AMP from adenine: step 1/1.</text>
</comment>
<comment type="subunit">
    <text evidence="1">Homodimer.</text>
</comment>
<comment type="subcellular location">
    <subcellularLocation>
        <location evidence="1">Cytoplasm</location>
    </subcellularLocation>
</comment>
<comment type="similarity">
    <text evidence="1">Belongs to the purine/pyrimidine phosphoribosyltransferase family.</text>
</comment>
<gene>
    <name evidence="1" type="primary">apt</name>
    <name type="ordered locus">ECDH10B_0425</name>
</gene>
<dbReference type="EC" id="2.4.2.7" evidence="1"/>
<dbReference type="EMBL" id="CP000948">
    <property type="protein sequence ID" value="ACB01596.1"/>
    <property type="molecule type" value="Genomic_DNA"/>
</dbReference>
<dbReference type="RefSeq" id="WP_000127356.1">
    <property type="nucleotide sequence ID" value="NC_010473.1"/>
</dbReference>
<dbReference type="SMR" id="B1XFQ6"/>
<dbReference type="GeneID" id="93776981"/>
<dbReference type="KEGG" id="ecd:ECDH10B_0425"/>
<dbReference type="HOGENOM" id="CLU_063339_3_0_6"/>
<dbReference type="UniPathway" id="UPA00588">
    <property type="reaction ID" value="UER00646"/>
</dbReference>
<dbReference type="GO" id="GO:0005737">
    <property type="term" value="C:cytoplasm"/>
    <property type="evidence" value="ECO:0007669"/>
    <property type="project" value="UniProtKB-SubCell"/>
</dbReference>
<dbReference type="GO" id="GO:0002055">
    <property type="term" value="F:adenine binding"/>
    <property type="evidence" value="ECO:0007669"/>
    <property type="project" value="TreeGrafter"/>
</dbReference>
<dbReference type="GO" id="GO:0003999">
    <property type="term" value="F:adenine phosphoribosyltransferase activity"/>
    <property type="evidence" value="ECO:0007669"/>
    <property type="project" value="UniProtKB-UniRule"/>
</dbReference>
<dbReference type="GO" id="GO:0016208">
    <property type="term" value="F:AMP binding"/>
    <property type="evidence" value="ECO:0007669"/>
    <property type="project" value="TreeGrafter"/>
</dbReference>
<dbReference type="GO" id="GO:0006168">
    <property type="term" value="P:adenine salvage"/>
    <property type="evidence" value="ECO:0007669"/>
    <property type="project" value="InterPro"/>
</dbReference>
<dbReference type="GO" id="GO:0044209">
    <property type="term" value="P:AMP salvage"/>
    <property type="evidence" value="ECO:0007669"/>
    <property type="project" value="UniProtKB-UniRule"/>
</dbReference>
<dbReference type="GO" id="GO:0006166">
    <property type="term" value="P:purine ribonucleoside salvage"/>
    <property type="evidence" value="ECO:0007669"/>
    <property type="project" value="UniProtKB-KW"/>
</dbReference>
<dbReference type="CDD" id="cd06223">
    <property type="entry name" value="PRTases_typeI"/>
    <property type="match status" value="1"/>
</dbReference>
<dbReference type="FunFam" id="3.40.50.2020:FF:000004">
    <property type="entry name" value="Adenine phosphoribosyltransferase"/>
    <property type="match status" value="1"/>
</dbReference>
<dbReference type="Gene3D" id="3.40.50.2020">
    <property type="match status" value="1"/>
</dbReference>
<dbReference type="HAMAP" id="MF_00004">
    <property type="entry name" value="Aden_phosphoribosyltr"/>
    <property type="match status" value="1"/>
</dbReference>
<dbReference type="InterPro" id="IPR005764">
    <property type="entry name" value="Ade_phspho_trans"/>
</dbReference>
<dbReference type="InterPro" id="IPR000836">
    <property type="entry name" value="PRibTrfase_dom"/>
</dbReference>
<dbReference type="InterPro" id="IPR029057">
    <property type="entry name" value="PRTase-like"/>
</dbReference>
<dbReference type="InterPro" id="IPR050054">
    <property type="entry name" value="UPRTase/APRTase"/>
</dbReference>
<dbReference type="NCBIfam" id="TIGR01090">
    <property type="entry name" value="apt"/>
    <property type="match status" value="1"/>
</dbReference>
<dbReference type="NCBIfam" id="NF002632">
    <property type="entry name" value="PRK02304.1-1"/>
    <property type="match status" value="1"/>
</dbReference>
<dbReference type="NCBIfam" id="NF002633">
    <property type="entry name" value="PRK02304.1-2"/>
    <property type="match status" value="1"/>
</dbReference>
<dbReference type="NCBIfam" id="NF002634">
    <property type="entry name" value="PRK02304.1-3"/>
    <property type="match status" value="1"/>
</dbReference>
<dbReference type="NCBIfam" id="NF002636">
    <property type="entry name" value="PRK02304.1-5"/>
    <property type="match status" value="1"/>
</dbReference>
<dbReference type="PANTHER" id="PTHR32315">
    <property type="entry name" value="ADENINE PHOSPHORIBOSYLTRANSFERASE"/>
    <property type="match status" value="1"/>
</dbReference>
<dbReference type="PANTHER" id="PTHR32315:SF3">
    <property type="entry name" value="ADENINE PHOSPHORIBOSYLTRANSFERASE"/>
    <property type="match status" value="1"/>
</dbReference>
<dbReference type="Pfam" id="PF00156">
    <property type="entry name" value="Pribosyltran"/>
    <property type="match status" value="1"/>
</dbReference>
<dbReference type="SUPFAM" id="SSF53271">
    <property type="entry name" value="PRTase-like"/>
    <property type="match status" value="1"/>
</dbReference>
<dbReference type="PROSITE" id="PS00103">
    <property type="entry name" value="PUR_PYR_PR_TRANSFER"/>
    <property type="match status" value="1"/>
</dbReference>